<name>ASST_METAC</name>
<protein>
    <recommendedName>
        <fullName evidence="5">L-aspartate semialdehyde sulfurtransferase</fullName>
        <ecNumber evidence="6">2.8.1.16</ecNumber>
    </recommendedName>
</protein>
<reference key="1">
    <citation type="journal article" date="2002" name="Genome Res.">
        <title>The genome of Methanosarcina acetivorans reveals extensive metabolic and physiological diversity.</title>
        <authorList>
            <person name="Galagan J.E."/>
            <person name="Nusbaum C."/>
            <person name="Roy A."/>
            <person name="Endrizzi M.G."/>
            <person name="Macdonald P."/>
            <person name="FitzHugh W."/>
            <person name="Calvo S."/>
            <person name="Engels R."/>
            <person name="Smirnov S."/>
            <person name="Atnoor D."/>
            <person name="Brown A."/>
            <person name="Allen N."/>
            <person name="Naylor J."/>
            <person name="Stange-Thomann N."/>
            <person name="DeArellano K."/>
            <person name="Johnson R."/>
            <person name="Linton L."/>
            <person name="McEwan P."/>
            <person name="McKernan K."/>
            <person name="Talamas J."/>
            <person name="Tirrell A."/>
            <person name="Ye W."/>
            <person name="Zimmer A."/>
            <person name="Barber R.D."/>
            <person name="Cann I."/>
            <person name="Graham D.E."/>
            <person name="Grahame D.A."/>
            <person name="Guss A.M."/>
            <person name="Hedderich R."/>
            <person name="Ingram-Smith C."/>
            <person name="Kuettner H.C."/>
            <person name="Krzycki J.A."/>
            <person name="Leigh J.A."/>
            <person name="Li W."/>
            <person name="Liu J."/>
            <person name="Mukhopadhyay B."/>
            <person name="Reeve J.N."/>
            <person name="Smith K."/>
            <person name="Springer T.A."/>
            <person name="Umayam L.A."/>
            <person name="White O."/>
            <person name="White R.H."/>
            <person name="de Macario E.C."/>
            <person name="Ferry J.G."/>
            <person name="Jarrell K.F."/>
            <person name="Jing H."/>
            <person name="Macario A.J.L."/>
            <person name="Paulsen I.T."/>
            <person name="Pritchett M."/>
            <person name="Sowers K.R."/>
            <person name="Swanson R.V."/>
            <person name="Zinder S.H."/>
            <person name="Lander E."/>
            <person name="Metcalf W.W."/>
            <person name="Birren B."/>
        </authorList>
    </citation>
    <scope>NUCLEOTIDE SEQUENCE [LARGE SCALE GENOMIC DNA]</scope>
    <source>
        <strain>ATCC 35395 / DSM 2834 / JCM 12185 / C2A</strain>
    </source>
</reference>
<reference key="2">
    <citation type="journal article" date="2014" name="Mol. Microbiol.">
        <title>Novel proteins for homocysteine biosynthesis in anaerobic microorganisms.</title>
        <authorList>
            <person name="Rauch B.J."/>
            <person name="Gustafson A."/>
            <person name="Perona J.J."/>
        </authorList>
    </citation>
    <scope>FUNCTION</scope>
    <scope>MUTAGENESIS OF CYS-54 AND CYS-131</scope>
</reference>
<reference key="3">
    <citation type="journal article" date="2015" name="Biochemistry">
        <title>Homocysteine is biosynthesized from aspartate semialdehyde and hydrogen sulfide in methanogenic archaea.</title>
        <authorList>
            <person name="Allen K.D."/>
            <person name="Miller D.V."/>
            <person name="Rauch B.J."/>
            <person name="Perona J.J."/>
            <person name="White R.H."/>
        </authorList>
    </citation>
    <scope>FUNCTION</scope>
    <scope>CATALYTIC ACTIVITY</scope>
    <scope>PATHWAY</scope>
</reference>
<reference key="4">
    <citation type="journal article" date="2017" name="Biochemistry">
        <title>Persulfide formation mediates cysteine and homocysteine biosynthesis in Methanosarcina acetivorans.</title>
        <authorList>
            <person name="Rauch B.J."/>
            <person name="Klimek J."/>
            <person name="David L."/>
            <person name="Perona J.J."/>
        </authorList>
    </citation>
    <scope>FUNCTION</scope>
    <scope>SUBUNIT</scope>
    <scope>ACTIVE SITE</scope>
</reference>
<keyword id="KW-0028">Amino-acid biosynthesis</keyword>
<keyword id="KW-0129">CBS domain</keyword>
<keyword id="KW-0486">Methionine biosynthesis</keyword>
<keyword id="KW-1185">Reference proteome</keyword>
<keyword id="KW-0677">Repeat</keyword>
<keyword id="KW-0808">Transferase</keyword>
<evidence type="ECO:0000255" key="1">
    <source>
        <dbReference type="PROSITE-ProRule" id="PRU00703"/>
    </source>
</evidence>
<evidence type="ECO:0000269" key="2">
    <source>
    </source>
</evidence>
<evidence type="ECO:0000269" key="3">
    <source>
    </source>
</evidence>
<evidence type="ECO:0000269" key="4">
    <source>
    </source>
</evidence>
<evidence type="ECO:0000305" key="5"/>
<evidence type="ECO:0000305" key="6">
    <source>
    </source>
</evidence>
<evidence type="ECO:0000312" key="7">
    <source>
        <dbReference type="EMBL" id="AAM05227.1"/>
    </source>
</evidence>
<accession>Q8TPT4</accession>
<feature type="chain" id="PRO_0000449825" description="L-aspartate semialdehyde sulfurtransferase">
    <location>
        <begin position="1"/>
        <end position="500"/>
    </location>
</feature>
<feature type="domain" description="CBS 1" evidence="1">
    <location>
        <begin position="384"/>
        <end position="441"/>
    </location>
</feature>
<feature type="domain" description="CBS 2" evidence="1">
    <location>
        <begin position="446"/>
        <end position="500"/>
    </location>
</feature>
<feature type="active site" description="Cysteine persulfide intermediate" evidence="4">
    <location>
        <position position="131"/>
    </location>
</feature>
<feature type="mutagenesis site" description="Loss of activity. Cannot grow on sulfide-only medium." evidence="2">
    <original>C</original>
    <variation>A</variation>
    <location>
        <position position="54"/>
    </location>
</feature>
<feature type="mutagenesis site" description="Can grow on sulfide-only medium." evidence="2">
    <original>C</original>
    <variation>A</variation>
    <location>
        <position position="131"/>
    </location>
</feature>
<sequence length="500" mass="54346">MVEKSVHEINKKIEDGSVNVVTAEEMVGIVENLGVEGAAREVDVVTTGTFGAMCSSGLMLNLGHSEPPIKIQKLWFNNVEAYSGLAAVDAYLGAAQISDTRGIQYGGAHVIEDLLRGKELDVHATSYGTDCYPRKVLDTRITLDDLNEAVLLNPRNAYQKYAAATNSSKRILNTYMGELLPNFGNVTYSGAGVLSPLSNDPDYETIGMGTRIFMGGAQGYIIGNGTQHSPSSSFGTLMLKGNLKEMSSDYLRAASFAGYGTTLYMGIGIPIPILNEKIAASTAVRDEDIFTDILDYAVGSRDKPVIKQVNYAELRSGSIELEGKNTPTSSLSSFKNARKIANELKEWVKHGKFFVSMPVEKLSREGSAKSMKQTQAVPLVKDVMADFIVTIKKNQTVQDAAKKIWENSFNHLAVVSDTGELVGILTAWDISKAVAENIFDSVESVMTKKVLTCAPNEPVDLAARRLDRYGVSAMPVIDTQRKVLGIITSDNISKLLARRY</sequence>
<organism>
    <name type="scientific">Methanosarcina acetivorans (strain ATCC 35395 / DSM 2834 / JCM 12185 / C2A)</name>
    <dbReference type="NCBI Taxonomy" id="188937"/>
    <lineage>
        <taxon>Archaea</taxon>
        <taxon>Methanobacteriati</taxon>
        <taxon>Methanobacteriota</taxon>
        <taxon>Stenosarchaea group</taxon>
        <taxon>Methanomicrobia</taxon>
        <taxon>Methanosarcinales</taxon>
        <taxon>Methanosarcinaceae</taxon>
        <taxon>Methanosarcina</taxon>
    </lineage>
</organism>
<gene>
    <name evidence="7" type="ordered locus">MA_1821</name>
</gene>
<comment type="function">
    <text evidence="2 3 4 6">Required for O-acetylhomoserine sulfhydrylase (OAHS)-independent homocysteine (Hcy) biosynthesis (PubMed:25315403, PubMed:25938369). Together with MA_1822, catalyzes the condensation of sulfide with aspartate semialdehyde to generate homocysteine (Probable). Likely functions through persulfide intermediate (PubMed:28165724).</text>
</comment>
<comment type="catalytic activity">
    <reaction evidence="6">
        <text>L-aspartate 4-semialdehyde + reduced 2[4Fe-4S]-[ferredoxin] + hydrogen sulfide + 3 H(+) = oxidized 2[4Fe-4S]-[ferredoxin] + L-homocysteine + H2O</text>
        <dbReference type="Rhea" id="RHEA:58412"/>
        <dbReference type="Rhea" id="RHEA-COMP:10002"/>
        <dbReference type="Rhea" id="RHEA-COMP:10004"/>
        <dbReference type="ChEBI" id="CHEBI:15377"/>
        <dbReference type="ChEBI" id="CHEBI:15378"/>
        <dbReference type="ChEBI" id="CHEBI:29919"/>
        <dbReference type="ChEBI" id="CHEBI:33722"/>
        <dbReference type="ChEBI" id="CHEBI:33723"/>
        <dbReference type="ChEBI" id="CHEBI:58199"/>
        <dbReference type="ChEBI" id="CHEBI:537519"/>
        <dbReference type="EC" id="2.8.1.16"/>
    </reaction>
</comment>
<comment type="pathway">
    <text evidence="6">Amino-acid biosynthesis.</text>
</comment>
<comment type="subunit">
    <text evidence="4">Forms homodimers. May form a complex with MA_1822.</text>
</comment>
<comment type="similarity">
    <text evidence="5">Belongs to the L-aspartate semialdehyde sulfurtransferase family.</text>
</comment>
<dbReference type="EC" id="2.8.1.16" evidence="6"/>
<dbReference type="EMBL" id="AE010299">
    <property type="protein sequence ID" value="AAM05227.1"/>
    <property type="molecule type" value="Genomic_DNA"/>
</dbReference>
<dbReference type="RefSeq" id="WP_011021823.1">
    <property type="nucleotide sequence ID" value="NC_003552.1"/>
</dbReference>
<dbReference type="SMR" id="Q8TPT4"/>
<dbReference type="FunCoup" id="Q8TPT4">
    <property type="interactions" value="13"/>
</dbReference>
<dbReference type="STRING" id="188937.MA_1821"/>
<dbReference type="EnsemblBacteria" id="AAM05227">
    <property type="protein sequence ID" value="AAM05227"/>
    <property type="gene ID" value="MA_1821"/>
</dbReference>
<dbReference type="GeneID" id="1473710"/>
<dbReference type="KEGG" id="mac:MA_1821"/>
<dbReference type="HOGENOM" id="CLU_043239_0_0_2"/>
<dbReference type="InParanoid" id="Q8TPT4"/>
<dbReference type="OrthoDB" id="295172at2157"/>
<dbReference type="PhylomeDB" id="Q8TPT4"/>
<dbReference type="BioCyc" id="MetaCyc:MONOMER-20451"/>
<dbReference type="BRENDA" id="2.8.1.16">
    <property type="organism ID" value="7224"/>
</dbReference>
<dbReference type="Proteomes" id="UP000002487">
    <property type="component" value="Chromosome"/>
</dbReference>
<dbReference type="GO" id="GO:0016740">
    <property type="term" value="F:transferase activity"/>
    <property type="evidence" value="ECO:0007669"/>
    <property type="project" value="UniProtKB-KW"/>
</dbReference>
<dbReference type="GO" id="GO:0009086">
    <property type="term" value="P:methionine biosynthetic process"/>
    <property type="evidence" value="ECO:0007669"/>
    <property type="project" value="UniProtKB-KW"/>
</dbReference>
<dbReference type="Gene3D" id="3.10.580.10">
    <property type="entry name" value="CBS-domain"/>
    <property type="match status" value="1"/>
</dbReference>
<dbReference type="InterPro" id="IPR000644">
    <property type="entry name" value="CBS_dom"/>
</dbReference>
<dbReference type="InterPro" id="IPR046342">
    <property type="entry name" value="CBS_dom_sf"/>
</dbReference>
<dbReference type="InterPro" id="IPR051462">
    <property type="entry name" value="CBS_domain-containing"/>
</dbReference>
<dbReference type="InterPro" id="IPR002708">
    <property type="entry name" value="HcyBio"/>
</dbReference>
<dbReference type="InterPro" id="IPR016426">
    <property type="entry name" value="MA1821-like"/>
</dbReference>
<dbReference type="PANTHER" id="PTHR48108">
    <property type="entry name" value="CBS DOMAIN-CONTAINING PROTEIN CBSX2, CHLOROPLASTIC"/>
    <property type="match status" value="1"/>
</dbReference>
<dbReference type="PANTHER" id="PTHR48108:SF30">
    <property type="entry name" value="L-ASPARTATE SEMIALDEHYDE SULFURTRANSFERASE"/>
    <property type="match status" value="1"/>
</dbReference>
<dbReference type="Pfam" id="PF00571">
    <property type="entry name" value="CBS"/>
    <property type="match status" value="2"/>
</dbReference>
<dbReference type="Pfam" id="PF01837">
    <property type="entry name" value="HcyBio"/>
    <property type="match status" value="1"/>
</dbReference>
<dbReference type="PIRSF" id="PIRSF004698">
    <property type="entry name" value="UCP004698_CBS_MJ0100"/>
    <property type="match status" value="1"/>
</dbReference>
<dbReference type="SMART" id="SM00116">
    <property type="entry name" value="CBS"/>
    <property type="match status" value="2"/>
</dbReference>
<dbReference type="SUPFAM" id="SSF54631">
    <property type="entry name" value="CBS-domain pair"/>
    <property type="match status" value="1"/>
</dbReference>
<dbReference type="PROSITE" id="PS51371">
    <property type="entry name" value="CBS"/>
    <property type="match status" value="2"/>
</dbReference>
<proteinExistence type="evidence at protein level"/>